<keyword id="KW-1185">Reference proteome</keyword>
<keyword id="KW-0677">Repeat</keyword>
<keyword id="KW-0802">TPR repeat</keyword>
<organism>
    <name type="scientific">Aquifex aeolicus (strain VF5)</name>
    <dbReference type="NCBI Taxonomy" id="224324"/>
    <lineage>
        <taxon>Bacteria</taxon>
        <taxon>Pseudomonadati</taxon>
        <taxon>Aquificota</taxon>
        <taxon>Aquificia</taxon>
        <taxon>Aquificales</taxon>
        <taxon>Aquificaceae</taxon>
        <taxon>Aquifex</taxon>
    </lineage>
</organism>
<feature type="chain" id="PRO_0000189834" description="Uncharacterized protein aq_1088">
    <location>
        <begin position="1"/>
        <end position="761"/>
    </location>
</feature>
<feature type="repeat" description="TPR 1">
    <location>
        <begin position="35"/>
        <end position="68"/>
    </location>
</feature>
<feature type="repeat" description="TPR 2">
    <location>
        <begin position="69"/>
        <end position="102"/>
    </location>
</feature>
<feature type="repeat" description="TPR 3">
    <location>
        <begin position="103"/>
        <end position="136"/>
    </location>
</feature>
<feature type="repeat" description="TPR 4">
    <location>
        <begin position="137"/>
        <end position="170"/>
    </location>
</feature>
<feature type="repeat" description="TPR 5">
    <location>
        <begin position="172"/>
        <end position="203"/>
    </location>
</feature>
<feature type="repeat" description="TPR 6">
    <location>
        <begin position="204"/>
        <end position="237"/>
    </location>
</feature>
<feature type="repeat" description="TPR 7">
    <location>
        <begin position="351"/>
        <end position="384"/>
    </location>
</feature>
<feature type="repeat" description="TPR 8">
    <location>
        <begin position="419"/>
        <end position="452"/>
    </location>
</feature>
<feature type="region of interest" description="Protein sulfotransferase-like">
    <location>
        <begin position="487"/>
        <end position="761"/>
    </location>
</feature>
<name>Y1088_AQUAE</name>
<sequence>MSSLISRLRKLFKSRNTHDFSNLCKENYQTLLSSEEGKILLGIYHFLSGEPQKAEELLSQVSENSLNSAQGLSDLGLLYFFLGRVEDAERVLKKALKFSDVDDALYARLGALYYSQGKLEEAQHYWERALSLNPNKVEILYNLGVLHLNKGELEKALDLFERALRLKPDFREAEEKKTLILLSLNRIDELVEEYYRELEKNPNEEVYIKLGNTLYTAGRLAEARAVFQEGAEKFPHDPRLKLGLIEVLKEEGRTYQAGTLLKEWLEDTSWVDEEKTPNKDEFLMQMRFRLNELRIQASFLDTAEKDLEKVENKEDYPEYYILKSKILMERNKGLEAADLLREAKERFPAHLGVLQELVHVLTSIGELEEAKEIQSQIVAINPSAVIQQVEMEDYKATDEQIQVLETLLNSPAVPKQTRASAGFVLHKVLEKRKDYDKAFEVLIKANELVKEEINYDWREHRFMIQRTIEVFTPEVVERLKGRGHPSKRPIFVLGMPRSGTTLTEQILGSHSMVYPAGELPFVPKIVNLIPKALQYVGKEPKEWPEAILEFDERLLKSAAQYYLDRVAKLDSEHPRIVDKLPHNFDYVGLILLMFPNAKVIHLKRNDLDVAVSNYQQNFAAKHGTMGFAFDLRWIGHMLNDHRAIMEHWHKLFPGQIYELDYQRLTEEPEEVIRELLEFCELPWEDRVLEYYKTKRPVKTASIKQVRKGIYRSSVEKWRRYEKYLTPVIEILQEGFKKLEDPEIEKYQDKVIPKGLVGYTVG</sequence>
<gene>
    <name type="ordered locus">aq_1088</name>
</gene>
<proteinExistence type="inferred from homology"/>
<accession>O67178</accession>
<reference key="1">
    <citation type="journal article" date="1998" name="Nature">
        <title>The complete genome of the hyperthermophilic bacterium Aquifex aeolicus.</title>
        <authorList>
            <person name="Deckert G."/>
            <person name="Warren P.V."/>
            <person name="Gaasterland T."/>
            <person name="Young W.G."/>
            <person name="Lenox A.L."/>
            <person name="Graham D.E."/>
            <person name="Overbeek R."/>
            <person name="Snead M.A."/>
            <person name="Keller M."/>
            <person name="Aujay M."/>
            <person name="Huber R."/>
            <person name="Feldman R.A."/>
            <person name="Short J.M."/>
            <person name="Olsen G.J."/>
            <person name="Swanson R.V."/>
        </authorList>
    </citation>
    <scope>NUCLEOTIDE SEQUENCE [LARGE SCALE GENOMIC DNA]</scope>
    <source>
        <strain>VF5</strain>
    </source>
</reference>
<comment type="similarity">
    <text evidence="1">In the C-terminal section; belongs to the protein sulfotransferase family.</text>
</comment>
<dbReference type="EMBL" id="AE000657">
    <property type="protein sequence ID" value="AAC07141.1"/>
    <property type="molecule type" value="Genomic_DNA"/>
</dbReference>
<dbReference type="PIR" id="G70393">
    <property type="entry name" value="G70393"/>
</dbReference>
<dbReference type="RefSeq" id="NP_213741.1">
    <property type="nucleotide sequence ID" value="NC_000918.1"/>
</dbReference>
<dbReference type="RefSeq" id="WP_010880679.1">
    <property type="nucleotide sequence ID" value="NC_000918.1"/>
</dbReference>
<dbReference type="SMR" id="O67178"/>
<dbReference type="STRING" id="224324.aq_1088"/>
<dbReference type="EnsemblBacteria" id="AAC07141">
    <property type="protein sequence ID" value="AAC07141"/>
    <property type="gene ID" value="aq_1088"/>
</dbReference>
<dbReference type="KEGG" id="aae:aq_1088"/>
<dbReference type="eggNOG" id="COG0457">
    <property type="taxonomic scope" value="Bacteria"/>
</dbReference>
<dbReference type="HOGENOM" id="CLU_327519_0_0_0"/>
<dbReference type="InParanoid" id="O67178"/>
<dbReference type="OrthoDB" id="9785185at2"/>
<dbReference type="Proteomes" id="UP000000798">
    <property type="component" value="Chromosome"/>
</dbReference>
<dbReference type="Gene3D" id="3.40.50.300">
    <property type="entry name" value="P-loop containing nucleotide triphosphate hydrolases"/>
    <property type="match status" value="1"/>
</dbReference>
<dbReference type="Gene3D" id="1.25.40.10">
    <property type="entry name" value="Tetratricopeptide repeat domain"/>
    <property type="match status" value="3"/>
</dbReference>
<dbReference type="InterPro" id="IPR027417">
    <property type="entry name" value="P-loop_NTPase"/>
</dbReference>
<dbReference type="InterPro" id="IPR011990">
    <property type="entry name" value="TPR-like_helical_dom_sf"/>
</dbReference>
<dbReference type="InterPro" id="IPR019734">
    <property type="entry name" value="TPR_rpt"/>
</dbReference>
<dbReference type="InterPro" id="IPR051685">
    <property type="entry name" value="Ycf3/AcsC/BcsC/TPR_MFPF"/>
</dbReference>
<dbReference type="PANTHER" id="PTHR44943">
    <property type="entry name" value="CELLULOSE SYNTHASE OPERON PROTEIN C"/>
    <property type="match status" value="1"/>
</dbReference>
<dbReference type="PANTHER" id="PTHR44943:SF8">
    <property type="entry name" value="TPR REPEAT-CONTAINING PROTEIN MJ0263"/>
    <property type="match status" value="1"/>
</dbReference>
<dbReference type="Pfam" id="PF13469">
    <property type="entry name" value="Sulfotransfer_3"/>
    <property type="match status" value="1"/>
</dbReference>
<dbReference type="Pfam" id="PF13432">
    <property type="entry name" value="TPR_16"/>
    <property type="match status" value="1"/>
</dbReference>
<dbReference type="Pfam" id="PF14559">
    <property type="entry name" value="TPR_19"/>
    <property type="match status" value="1"/>
</dbReference>
<dbReference type="Pfam" id="PF13181">
    <property type="entry name" value="TPR_8"/>
    <property type="match status" value="1"/>
</dbReference>
<dbReference type="SMART" id="SM00028">
    <property type="entry name" value="TPR"/>
    <property type="match status" value="6"/>
</dbReference>
<dbReference type="SUPFAM" id="SSF52540">
    <property type="entry name" value="P-loop containing nucleoside triphosphate hydrolases"/>
    <property type="match status" value="1"/>
</dbReference>
<dbReference type="SUPFAM" id="SSF48452">
    <property type="entry name" value="TPR-like"/>
    <property type="match status" value="2"/>
</dbReference>
<dbReference type="PROSITE" id="PS50005">
    <property type="entry name" value="TPR"/>
    <property type="match status" value="6"/>
</dbReference>
<dbReference type="PROSITE" id="PS50293">
    <property type="entry name" value="TPR_REGION"/>
    <property type="match status" value="3"/>
</dbReference>
<protein>
    <recommendedName>
        <fullName>Uncharacterized protein aq_1088</fullName>
    </recommendedName>
</protein>
<evidence type="ECO:0000305" key="1"/>